<organism>
    <name type="scientific">Symbiobacterium thermophilum (strain DSM 24528 / JCM 14929 / IAM 14863 / T)</name>
    <dbReference type="NCBI Taxonomy" id="292459"/>
    <lineage>
        <taxon>Bacteria</taxon>
        <taxon>Bacillati</taxon>
        <taxon>Bacillota</taxon>
        <taxon>Clostridia</taxon>
        <taxon>Eubacteriales</taxon>
        <taxon>Symbiobacteriaceae</taxon>
        <taxon>Symbiobacterium</taxon>
    </lineage>
</organism>
<evidence type="ECO:0000255" key="1">
    <source>
        <dbReference type="HAMAP-Rule" id="MF_01358"/>
    </source>
</evidence>
<dbReference type="EC" id="7.1.1.-" evidence="1"/>
<dbReference type="EMBL" id="AP006840">
    <property type="protein sequence ID" value="BAD41759.1"/>
    <property type="molecule type" value="Genomic_DNA"/>
</dbReference>
<dbReference type="RefSeq" id="WP_011196893.1">
    <property type="nucleotide sequence ID" value="NC_006177.1"/>
</dbReference>
<dbReference type="SMR" id="Q67KN9"/>
<dbReference type="STRING" id="292459.STH2774"/>
<dbReference type="KEGG" id="sth:STH2774"/>
<dbReference type="eggNOG" id="COG0649">
    <property type="taxonomic scope" value="Bacteria"/>
</dbReference>
<dbReference type="HOGENOM" id="CLU_015134_1_2_9"/>
<dbReference type="OrthoDB" id="9801496at2"/>
<dbReference type="Proteomes" id="UP000000417">
    <property type="component" value="Chromosome"/>
</dbReference>
<dbReference type="GO" id="GO:0005886">
    <property type="term" value="C:plasma membrane"/>
    <property type="evidence" value="ECO:0007669"/>
    <property type="project" value="UniProtKB-SubCell"/>
</dbReference>
<dbReference type="GO" id="GO:0051287">
    <property type="term" value="F:NAD binding"/>
    <property type="evidence" value="ECO:0007669"/>
    <property type="project" value="InterPro"/>
</dbReference>
<dbReference type="GO" id="GO:0050136">
    <property type="term" value="F:NADH:ubiquinone reductase (non-electrogenic) activity"/>
    <property type="evidence" value="ECO:0007669"/>
    <property type="project" value="UniProtKB-UniRule"/>
</dbReference>
<dbReference type="GO" id="GO:0048038">
    <property type="term" value="F:quinone binding"/>
    <property type="evidence" value="ECO:0007669"/>
    <property type="project" value="UniProtKB-KW"/>
</dbReference>
<dbReference type="Gene3D" id="1.10.645.10">
    <property type="entry name" value="Cytochrome-c3 Hydrogenase, chain B"/>
    <property type="match status" value="1"/>
</dbReference>
<dbReference type="HAMAP" id="MF_01358">
    <property type="entry name" value="NDH1_NuoD"/>
    <property type="match status" value="1"/>
</dbReference>
<dbReference type="InterPro" id="IPR001135">
    <property type="entry name" value="NADH_Q_OxRdtase_suD"/>
</dbReference>
<dbReference type="InterPro" id="IPR022885">
    <property type="entry name" value="NDH1_su_D/H"/>
</dbReference>
<dbReference type="InterPro" id="IPR029014">
    <property type="entry name" value="NiFe-Hase_large"/>
</dbReference>
<dbReference type="NCBIfam" id="NF004739">
    <property type="entry name" value="PRK06075.1"/>
    <property type="match status" value="1"/>
</dbReference>
<dbReference type="PANTHER" id="PTHR11993:SF10">
    <property type="entry name" value="NADH DEHYDROGENASE [UBIQUINONE] IRON-SULFUR PROTEIN 2, MITOCHONDRIAL"/>
    <property type="match status" value="1"/>
</dbReference>
<dbReference type="PANTHER" id="PTHR11993">
    <property type="entry name" value="NADH-UBIQUINONE OXIDOREDUCTASE 49 KDA SUBUNIT"/>
    <property type="match status" value="1"/>
</dbReference>
<dbReference type="Pfam" id="PF00346">
    <property type="entry name" value="Complex1_49kDa"/>
    <property type="match status" value="2"/>
</dbReference>
<dbReference type="SUPFAM" id="SSF56762">
    <property type="entry name" value="HydB/Nqo4-like"/>
    <property type="match status" value="1"/>
</dbReference>
<protein>
    <recommendedName>
        <fullName evidence="1">NADH-quinone oxidoreductase subunit D 2</fullName>
        <ecNumber evidence="1">7.1.1.-</ecNumber>
    </recommendedName>
    <alternativeName>
        <fullName evidence="1">NADH dehydrogenase I subunit D 2</fullName>
    </alternativeName>
    <alternativeName>
        <fullName evidence="1">NDH-1 subunit D 2</fullName>
    </alternativeName>
</protein>
<gene>
    <name evidence="1" type="primary">nuoD2</name>
    <name type="ordered locus">STH2774</name>
</gene>
<feature type="chain" id="PRO_0000357944" description="NADH-quinone oxidoreductase subunit D 2">
    <location>
        <begin position="1"/>
        <end position="384"/>
    </location>
</feature>
<name>NUOD2_SYMTH</name>
<reference key="1">
    <citation type="journal article" date="2004" name="Nucleic Acids Res.">
        <title>Genome sequence of Symbiobacterium thermophilum, an uncultivable bacterium that depends on microbial commensalism.</title>
        <authorList>
            <person name="Ueda K."/>
            <person name="Yamashita A."/>
            <person name="Ishikawa J."/>
            <person name="Shimada M."/>
            <person name="Watsuji T."/>
            <person name="Morimura K."/>
            <person name="Ikeda H."/>
            <person name="Hattori M."/>
            <person name="Beppu T."/>
        </authorList>
    </citation>
    <scope>NUCLEOTIDE SEQUENCE [LARGE SCALE GENOMIC DNA]</scope>
    <source>
        <strain>DSM 24528 / JCM 14929 / IAM 14863 / T</strain>
    </source>
</reference>
<keyword id="KW-1003">Cell membrane</keyword>
<keyword id="KW-0472">Membrane</keyword>
<keyword id="KW-0520">NAD</keyword>
<keyword id="KW-0874">Quinone</keyword>
<keyword id="KW-1185">Reference proteome</keyword>
<keyword id="KW-1278">Translocase</keyword>
<keyword id="KW-0813">Transport</keyword>
<proteinExistence type="inferred from homology"/>
<comment type="function">
    <text evidence="1">NDH-1 shuttles electrons from NADH, via FMN and iron-sulfur (Fe-S) centers, to quinones in the respiratory chain. The immediate electron acceptor for the enzyme in this species is believed to be a menaquinone. Couples the redox reaction to proton translocation (for every two electrons transferred, four hydrogen ions are translocated across the cytoplasmic membrane), and thus conserves the redox energy in a proton gradient.</text>
</comment>
<comment type="catalytic activity">
    <reaction evidence="1">
        <text>a quinone + NADH + 5 H(+)(in) = a quinol + NAD(+) + 4 H(+)(out)</text>
        <dbReference type="Rhea" id="RHEA:57888"/>
        <dbReference type="ChEBI" id="CHEBI:15378"/>
        <dbReference type="ChEBI" id="CHEBI:24646"/>
        <dbReference type="ChEBI" id="CHEBI:57540"/>
        <dbReference type="ChEBI" id="CHEBI:57945"/>
        <dbReference type="ChEBI" id="CHEBI:132124"/>
    </reaction>
</comment>
<comment type="subunit">
    <text evidence="1">NDH-1 is composed of 14 different subunits. Subunits NuoB, C, D, E, F, and G constitute the peripheral sector of the complex.</text>
</comment>
<comment type="subcellular location">
    <subcellularLocation>
        <location evidence="1">Cell membrane</location>
        <topology evidence="1">Peripheral membrane protein</topology>
        <orientation evidence="1">Cytoplasmic side</orientation>
    </subcellularLocation>
</comment>
<comment type="similarity">
    <text evidence="1">Belongs to the complex I 49 kDa subunit family.</text>
</comment>
<sequence length="384" mass="43902">MNVERTQELLVNMGPQHPSTHGVLRLMIKLDGEQVTWCEPDIGYLHRCFEKLAEQKTYPQVIPFTDRTDYLAAMLNELCYVEAVEKLFGDAIQVPERAQYIRVMLAELQRITSHLLALGSMAMDLGATTPFLYCWRDREKLYSLFERITGGRMLYNYLRIGGVRNDLPEGILGTPQDGEDKADKTIWGFINYFDSYVYPEWKALVTGNRIFQYRTKNIGVLTAEQAIAYSCSGAVLRGSGVKWDLRKNLPYAIYDRFEFDIPVGQNGDSFDRWWVRQEEMYQSSRIVKQCLEWLAENPGPVMAPKMPRVLKPPKGEVYHRIEGARGEVACYVVSDGSTNPYKVKWRSPAFTHLQLMPLLCPGHKIADIIAILGSIDVVLGEVDR</sequence>
<accession>Q67KN9</accession>